<reference key="1">
    <citation type="journal article" date="1999" name="J. Bacteriol.">
        <title>Gene duplication and multiplicity of collagenases in Clostridium histolyticum.</title>
        <authorList>
            <person name="Matsushita O."/>
            <person name="Jung C.-M."/>
            <person name="Katayama S."/>
            <person name="Minami J."/>
            <person name="Takahashi Y."/>
            <person name="Okabe A."/>
        </authorList>
    </citation>
    <scope>NUCLEOTIDE SEQUENCE [GENOMIC DNA]</scope>
    <source>
        <strain>ATCC 19401 / DSM 2158 / JCM 1403 / NCIMB 503 / NCTC 503</strain>
    </source>
</reference>
<keyword id="KW-0963">Cytoplasm</keyword>
<keyword id="KW-0227">DNA damage</keyword>
<keyword id="KW-0233">DNA recombination</keyword>
<keyword id="KW-0234">DNA repair</keyword>
<keyword id="KW-0238">DNA-binding</keyword>
<accession>Q9ZNJ6</accession>
<comment type="function">
    <text evidence="1">The RuvA-RuvB-RuvC complex processes Holliday junction (HJ) DNA during genetic recombination and DNA repair, while the RuvA-RuvB complex plays an important role in the rescue of blocked DNA replication forks via replication fork reversal (RFR). RuvA specifically binds to HJ cruciform DNA, conferring on it an open structure. The RuvB hexamer acts as an ATP-dependent pump, pulling dsDNA into and through the RuvAB complex. HJ branch migration allows RuvC to scan DNA until it finds its consensus sequence, where it cleaves and resolves the cruciform DNA.</text>
</comment>
<comment type="subunit">
    <text evidence="1">Homotetramer. Forms an RuvA(8)-RuvB(12)-Holliday junction (HJ) complex. HJ DNA is sandwiched between 2 RuvA tetramers; dsDNA enters through RuvA and exits via RuvB. An RuvB hexamer assembles on each DNA strand where it exits the tetramer. Each RuvB hexamer is contacted by two RuvA subunits (via domain III) on 2 adjacent RuvB subunits; this complex drives branch migration. In the full resolvosome a probable DNA-RuvA(4)-RuvB(12)-RuvC(2) complex forms which resolves the HJ.</text>
</comment>
<comment type="subcellular location">
    <subcellularLocation>
        <location evidence="1">Cytoplasm</location>
    </subcellularLocation>
</comment>
<comment type="domain">
    <text evidence="1">Has three domains with a flexible linker between the domains II and III and assumes an 'L' shape. Domain III is highly mobile and contacts RuvB.</text>
</comment>
<comment type="similarity">
    <text evidence="1">Belongs to the RuvA family.</text>
</comment>
<dbReference type="EMBL" id="AB014075">
    <property type="protein sequence ID" value="BAA34545.1"/>
    <property type="molecule type" value="Genomic_DNA"/>
</dbReference>
<dbReference type="PIR" id="T44358">
    <property type="entry name" value="T44358"/>
</dbReference>
<dbReference type="RefSeq" id="WP_138210549.1">
    <property type="nucleotide sequence ID" value="NZ_CBCRUQ010000003.1"/>
</dbReference>
<dbReference type="SMR" id="Q9ZNJ6"/>
<dbReference type="OrthoDB" id="5293449at2"/>
<dbReference type="GO" id="GO:0005737">
    <property type="term" value="C:cytoplasm"/>
    <property type="evidence" value="ECO:0007669"/>
    <property type="project" value="UniProtKB-SubCell"/>
</dbReference>
<dbReference type="GO" id="GO:0009379">
    <property type="term" value="C:Holliday junction helicase complex"/>
    <property type="evidence" value="ECO:0007669"/>
    <property type="project" value="InterPro"/>
</dbReference>
<dbReference type="GO" id="GO:0048476">
    <property type="term" value="C:Holliday junction resolvase complex"/>
    <property type="evidence" value="ECO:0007669"/>
    <property type="project" value="UniProtKB-UniRule"/>
</dbReference>
<dbReference type="GO" id="GO:0005524">
    <property type="term" value="F:ATP binding"/>
    <property type="evidence" value="ECO:0007669"/>
    <property type="project" value="InterPro"/>
</dbReference>
<dbReference type="GO" id="GO:0000400">
    <property type="term" value="F:four-way junction DNA binding"/>
    <property type="evidence" value="ECO:0007669"/>
    <property type="project" value="UniProtKB-UniRule"/>
</dbReference>
<dbReference type="GO" id="GO:0009378">
    <property type="term" value="F:four-way junction helicase activity"/>
    <property type="evidence" value="ECO:0007669"/>
    <property type="project" value="InterPro"/>
</dbReference>
<dbReference type="GO" id="GO:0006310">
    <property type="term" value="P:DNA recombination"/>
    <property type="evidence" value="ECO:0007669"/>
    <property type="project" value="UniProtKB-UniRule"/>
</dbReference>
<dbReference type="GO" id="GO:0006281">
    <property type="term" value="P:DNA repair"/>
    <property type="evidence" value="ECO:0007669"/>
    <property type="project" value="UniProtKB-UniRule"/>
</dbReference>
<dbReference type="CDD" id="cd14332">
    <property type="entry name" value="UBA_RuvA_C"/>
    <property type="match status" value="1"/>
</dbReference>
<dbReference type="Gene3D" id="1.10.150.20">
    <property type="entry name" value="5' to 3' exonuclease, C-terminal subdomain"/>
    <property type="match status" value="1"/>
</dbReference>
<dbReference type="Gene3D" id="1.10.8.10">
    <property type="entry name" value="DNA helicase RuvA subunit, C-terminal domain"/>
    <property type="match status" value="1"/>
</dbReference>
<dbReference type="Gene3D" id="2.40.50.140">
    <property type="entry name" value="Nucleic acid-binding proteins"/>
    <property type="match status" value="1"/>
</dbReference>
<dbReference type="HAMAP" id="MF_00031">
    <property type="entry name" value="DNA_HJ_migration_RuvA"/>
    <property type="match status" value="1"/>
</dbReference>
<dbReference type="InterPro" id="IPR013849">
    <property type="entry name" value="DNA_helicase_Holl-junc_RuvA_I"/>
</dbReference>
<dbReference type="InterPro" id="IPR003583">
    <property type="entry name" value="Hlx-hairpin-Hlx_DNA-bd_motif"/>
</dbReference>
<dbReference type="InterPro" id="IPR012340">
    <property type="entry name" value="NA-bd_OB-fold"/>
</dbReference>
<dbReference type="InterPro" id="IPR000085">
    <property type="entry name" value="RuvA"/>
</dbReference>
<dbReference type="InterPro" id="IPR010994">
    <property type="entry name" value="RuvA_2-like"/>
</dbReference>
<dbReference type="InterPro" id="IPR011114">
    <property type="entry name" value="RuvA_C"/>
</dbReference>
<dbReference type="InterPro" id="IPR036267">
    <property type="entry name" value="RuvA_C_sf"/>
</dbReference>
<dbReference type="NCBIfam" id="TIGR00084">
    <property type="entry name" value="ruvA"/>
    <property type="match status" value="1"/>
</dbReference>
<dbReference type="Pfam" id="PF14520">
    <property type="entry name" value="HHH_5"/>
    <property type="match status" value="1"/>
</dbReference>
<dbReference type="Pfam" id="PF07499">
    <property type="entry name" value="RuvA_C"/>
    <property type="match status" value="1"/>
</dbReference>
<dbReference type="Pfam" id="PF01330">
    <property type="entry name" value="RuvA_N"/>
    <property type="match status" value="1"/>
</dbReference>
<dbReference type="SMART" id="SM00278">
    <property type="entry name" value="HhH1"/>
    <property type="match status" value="2"/>
</dbReference>
<dbReference type="SUPFAM" id="SSF46929">
    <property type="entry name" value="DNA helicase RuvA subunit, C-terminal domain"/>
    <property type="match status" value="1"/>
</dbReference>
<dbReference type="SUPFAM" id="SSF50249">
    <property type="entry name" value="Nucleic acid-binding proteins"/>
    <property type="match status" value="1"/>
</dbReference>
<dbReference type="SUPFAM" id="SSF47781">
    <property type="entry name" value="RuvA domain 2-like"/>
    <property type="match status" value="1"/>
</dbReference>
<sequence length="197" mass="22169">MYEYIKGTYMGINKEYIVIENGDIGYKIHSSGYTIANMPNIGEHIMLYLTQIVREDFIGLYGFGSKEELELFNKLLTVNGIGAKASLSLLSITNVENLKRAIVLEDEKLLIKAPGIGKKTAQRIILELKDKLDVNLDEGIQTDSNDIKVSSKILEEAKEALMSLGYSEKECEKALKNVEEKESLEIIIKESLKFLMN</sequence>
<proteinExistence type="inferred from homology"/>
<gene>
    <name evidence="1" type="primary">ruvA</name>
</gene>
<feature type="chain" id="PRO_0000094622" description="Holliday junction branch migration complex subunit RuvA">
    <location>
        <begin position="1"/>
        <end position="197"/>
    </location>
</feature>
<feature type="region of interest" description="Domain I" evidence="1">
    <location>
        <begin position="1"/>
        <end position="64"/>
    </location>
</feature>
<feature type="region of interest" description="Domain II" evidence="1">
    <location>
        <begin position="65"/>
        <end position="143"/>
    </location>
</feature>
<feature type="region of interest" description="Flexible linker" evidence="1">
    <location>
        <begin position="144"/>
        <end position="149"/>
    </location>
</feature>
<feature type="region of interest" description="Domain III" evidence="1">
    <location>
        <begin position="149"/>
        <end position="197"/>
    </location>
</feature>
<name>RUVA_HATHI</name>
<organism>
    <name type="scientific">Hathewaya histolytica</name>
    <name type="common">Clostridium histolyticum</name>
    <dbReference type="NCBI Taxonomy" id="1498"/>
    <lineage>
        <taxon>Bacteria</taxon>
        <taxon>Bacillati</taxon>
        <taxon>Bacillota</taxon>
        <taxon>Clostridia</taxon>
        <taxon>Eubacteriales</taxon>
        <taxon>Clostridiaceae</taxon>
        <taxon>Hathewaya</taxon>
    </lineage>
</organism>
<protein>
    <recommendedName>
        <fullName evidence="1">Holliday junction branch migration complex subunit RuvA</fullName>
    </recommendedName>
</protein>
<evidence type="ECO:0000255" key="1">
    <source>
        <dbReference type="HAMAP-Rule" id="MF_00031"/>
    </source>
</evidence>